<evidence type="ECO:0000255" key="1">
    <source>
        <dbReference type="HAMAP-Rule" id="MF_00386"/>
    </source>
</evidence>
<evidence type="ECO:0000256" key="2">
    <source>
        <dbReference type="SAM" id="MobiDB-lite"/>
    </source>
</evidence>
<comment type="function">
    <text evidence="1">Could be involved in insertion of integral membrane proteins into the membrane.</text>
</comment>
<comment type="subcellular location">
    <subcellularLocation>
        <location evidence="1">Cell inner membrane</location>
        <topology evidence="1">Peripheral membrane protein</topology>
        <orientation evidence="1">Cytoplasmic side</orientation>
    </subcellularLocation>
</comment>
<comment type="similarity">
    <text evidence="1">Belongs to the UPF0161 family.</text>
</comment>
<name>YIDD_RHORT</name>
<organism>
    <name type="scientific">Rhodospirillum rubrum (strain ATCC 11170 / ATH 1.1.1 / DSM 467 / LMG 4362 / NCIMB 8255 / S1)</name>
    <dbReference type="NCBI Taxonomy" id="269796"/>
    <lineage>
        <taxon>Bacteria</taxon>
        <taxon>Pseudomonadati</taxon>
        <taxon>Pseudomonadota</taxon>
        <taxon>Alphaproteobacteria</taxon>
        <taxon>Rhodospirillales</taxon>
        <taxon>Rhodospirillaceae</taxon>
        <taxon>Rhodospirillum</taxon>
    </lineage>
</organism>
<dbReference type="EMBL" id="CP000230">
    <property type="protein sequence ID" value="ABC24132.1"/>
    <property type="molecule type" value="Genomic_DNA"/>
</dbReference>
<dbReference type="RefSeq" id="YP_428419.1">
    <property type="nucleotide sequence ID" value="NC_007643.1"/>
</dbReference>
<dbReference type="STRING" id="269796.Rru_A3338"/>
<dbReference type="EnsemblBacteria" id="ABC24132">
    <property type="protein sequence ID" value="ABC24132"/>
    <property type="gene ID" value="Rru_A3338"/>
</dbReference>
<dbReference type="KEGG" id="rru:Rru_A3338"/>
<dbReference type="PATRIC" id="fig|269796.9.peg.3452"/>
<dbReference type="eggNOG" id="COG0759">
    <property type="taxonomic scope" value="Bacteria"/>
</dbReference>
<dbReference type="HOGENOM" id="CLU_144811_2_1_5"/>
<dbReference type="PhylomeDB" id="Q2RP13"/>
<dbReference type="Proteomes" id="UP000001929">
    <property type="component" value="Chromosome"/>
</dbReference>
<dbReference type="GO" id="GO:0005886">
    <property type="term" value="C:plasma membrane"/>
    <property type="evidence" value="ECO:0007669"/>
    <property type="project" value="UniProtKB-SubCell"/>
</dbReference>
<dbReference type="HAMAP" id="MF_00386">
    <property type="entry name" value="UPF0161_YidD"/>
    <property type="match status" value="1"/>
</dbReference>
<dbReference type="InterPro" id="IPR002696">
    <property type="entry name" value="Membr_insert_effic_factor_YidD"/>
</dbReference>
<dbReference type="NCBIfam" id="TIGR00278">
    <property type="entry name" value="membrane protein insertion efficiency factor YidD"/>
    <property type="match status" value="1"/>
</dbReference>
<dbReference type="PANTHER" id="PTHR33383">
    <property type="entry name" value="MEMBRANE PROTEIN INSERTION EFFICIENCY FACTOR-RELATED"/>
    <property type="match status" value="1"/>
</dbReference>
<dbReference type="PANTHER" id="PTHR33383:SF1">
    <property type="entry name" value="MEMBRANE PROTEIN INSERTION EFFICIENCY FACTOR-RELATED"/>
    <property type="match status" value="1"/>
</dbReference>
<dbReference type="Pfam" id="PF01809">
    <property type="entry name" value="YidD"/>
    <property type="match status" value="1"/>
</dbReference>
<dbReference type="SMART" id="SM01234">
    <property type="entry name" value="Haemolytic"/>
    <property type="match status" value="1"/>
</dbReference>
<proteinExistence type="inferred from homology"/>
<keyword id="KW-0997">Cell inner membrane</keyword>
<keyword id="KW-1003">Cell membrane</keyword>
<keyword id="KW-0472">Membrane</keyword>
<keyword id="KW-1185">Reference proteome</keyword>
<sequence>MRPLAALSQGIGLLMRGLIWLYRLFLSPLLGQNCRFDPSCSRYALEAITRHGPFWGLWLAVRRISRCHPWGGMGYDPVPDDPRPGRCGCKDAGPAVSAGSTEGNPGRRTDGTDPD</sequence>
<reference key="1">
    <citation type="journal article" date="2011" name="Stand. Genomic Sci.">
        <title>Complete genome sequence of Rhodospirillum rubrum type strain (S1).</title>
        <authorList>
            <person name="Munk A.C."/>
            <person name="Copeland A."/>
            <person name="Lucas S."/>
            <person name="Lapidus A."/>
            <person name="Del Rio T.G."/>
            <person name="Barry K."/>
            <person name="Detter J.C."/>
            <person name="Hammon N."/>
            <person name="Israni S."/>
            <person name="Pitluck S."/>
            <person name="Brettin T."/>
            <person name="Bruce D."/>
            <person name="Han C."/>
            <person name="Tapia R."/>
            <person name="Gilna P."/>
            <person name="Schmutz J."/>
            <person name="Larimer F."/>
            <person name="Land M."/>
            <person name="Kyrpides N.C."/>
            <person name="Mavromatis K."/>
            <person name="Richardson P."/>
            <person name="Rohde M."/>
            <person name="Goeker M."/>
            <person name="Klenk H.P."/>
            <person name="Zhang Y."/>
            <person name="Roberts G.P."/>
            <person name="Reslewic S."/>
            <person name="Schwartz D.C."/>
        </authorList>
    </citation>
    <scope>NUCLEOTIDE SEQUENCE [LARGE SCALE GENOMIC DNA]</scope>
    <source>
        <strain>ATCC 11170 / ATH 1.1.1 / DSM 467 / LMG 4362 / NCIMB 8255 / S1</strain>
    </source>
</reference>
<protein>
    <recommendedName>
        <fullName evidence="1">Putative membrane protein insertion efficiency factor</fullName>
    </recommendedName>
</protein>
<feature type="chain" id="PRO_0000253157" description="Putative membrane protein insertion efficiency factor">
    <location>
        <begin position="1"/>
        <end position="115"/>
    </location>
</feature>
<feature type="region of interest" description="Disordered" evidence="2">
    <location>
        <begin position="81"/>
        <end position="115"/>
    </location>
</feature>
<feature type="compositionally biased region" description="Basic and acidic residues" evidence="2">
    <location>
        <begin position="105"/>
        <end position="115"/>
    </location>
</feature>
<accession>Q2RP13</accession>
<gene>
    <name type="ordered locus">Rru_A3338</name>
</gene>